<name>H3Y1_HUMAN</name>
<organism>
    <name type="scientific">Homo sapiens</name>
    <name type="common">Human</name>
    <dbReference type="NCBI Taxonomy" id="9606"/>
    <lineage>
        <taxon>Eukaryota</taxon>
        <taxon>Metazoa</taxon>
        <taxon>Chordata</taxon>
        <taxon>Craniata</taxon>
        <taxon>Vertebrata</taxon>
        <taxon>Euteleostomi</taxon>
        <taxon>Mammalia</taxon>
        <taxon>Eutheria</taxon>
        <taxon>Euarchontoglires</taxon>
        <taxon>Primates</taxon>
        <taxon>Haplorrhini</taxon>
        <taxon>Catarrhini</taxon>
        <taxon>Hominidae</taxon>
        <taxon>Homo</taxon>
    </lineage>
</organism>
<feature type="initiator methionine" description="Removed" evidence="12">
    <location>
        <position position="1"/>
    </location>
</feature>
<feature type="chain" id="PRO_0000445074" description="Histone H3.Y">
    <location>
        <begin position="2"/>
        <end position="136"/>
    </location>
</feature>
<feature type="region of interest" description="Disordered" evidence="6">
    <location>
        <begin position="1"/>
        <end position="43"/>
    </location>
</feature>
<feature type="compositionally biased region" description="Low complexity" evidence="6">
    <location>
        <begin position="1"/>
        <end position="16"/>
    </location>
</feature>
<feature type="modified residue" description="Asymmetric dimethylarginine" evidence="3">
    <location>
        <position position="3"/>
    </location>
</feature>
<feature type="modified residue" description="Citrulline; alternate" evidence="3">
    <location>
        <position position="3"/>
    </location>
</feature>
<feature type="modified residue" description="Phosphothreonine" evidence="3">
    <location>
        <position position="4"/>
    </location>
</feature>
<feature type="modified residue" description="Allysine; alternate" evidence="3">
    <location>
        <position position="5"/>
    </location>
</feature>
<feature type="modified residue" description="N6,N6,N6-trimethyllysine; alternate" evidence="3">
    <location>
        <position position="5"/>
    </location>
</feature>
<feature type="modified residue" description="N6,N6-dimethyllysine; alternate" evidence="3">
    <location>
        <position position="5"/>
    </location>
</feature>
<feature type="modified residue" description="N6-(2-hydroxyisobutyryl)lysine; alternate" evidence="3">
    <location>
        <position position="5"/>
    </location>
</feature>
<feature type="modified residue" description="N6-(beta-hydroxybutyryl)lysine; alternate" evidence="3">
    <location>
        <position position="5"/>
    </location>
</feature>
<feature type="modified residue" description="N6-acetyllysine; alternate" evidence="3">
    <location>
        <position position="5"/>
    </location>
</feature>
<feature type="modified residue" description="N6-crotonyllysine; alternate" evidence="3">
    <location>
        <position position="5"/>
    </location>
</feature>
<feature type="modified residue" description="N6-methyllysine; alternate" evidence="3">
    <location>
        <position position="5"/>
    </location>
</feature>
<feature type="modified residue" description="5-glutamyl dopamine; alternate" evidence="1">
    <location>
        <position position="6"/>
    </location>
</feature>
<feature type="modified residue" description="5-glutamyl serotonin; alternate" evidence="1">
    <location>
        <position position="6"/>
    </location>
</feature>
<feature type="modified residue" description="Phosphothreonine" evidence="3">
    <location>
        <position position="7"/>
    </location>
</feature>
<feature type="modified residue" description="Citrulline; alternate" evidence="3">
    <location>
        <position position="9"/>
    </location>
</feature>
<feature type="modified residue" description="Symmetric dimethylarginine" evidence="4">
    <location>
        <position position="9"/>
    </location>
</feature>
<feature type="modified residue" description="N6,N6,N6-trimethyllysine; alternate" evidence="3">
    <location>
        <position position="10"/>
    </location>
</feature>
<feature type="modified residue" description="N6,N6-dimethyllysine; alternate" evidence="3">
    <location>
        <position position="10"/>
    </location>
</feature>
<feature type="modified residue" description="N6-(2-hydroxyisobutyryl)lysine; alternate" evidence="3">
    <location>
        <position position="10"/>
    </location>
</feature>
<feature type="modified residue" description="N6-(beta-hydroxybutyryl)lysine; alternate" evidence="3">
    <location>
        <position position="10"/>
    </location>
</feature>
<feature type="modified residue" description="N6-acetyllysine; alternate" evidence="3">
    <location>
        <position position="10"/>
    </location>
</feature>
<feature type="modified residue" description="N6-butyryllysine; alternate" evidence="3">
    <location>
        <position position="10"/>
    </location>
</feature>
<feature type="modified residue" description="N6-crotonyllysine; alternate" evidence="3">
    <location>
        <position position="10"/>
    </location>
</feature>
<feature type="modified residue" description="N6-lactoyllysine; alternate" evidence="1">
    <location>
        <position position="10"/>
    </location>
</feature>
<feature type="modified residue" description="N6-methyllysine; alternate" evidence="3">
    <location>
        <position position="10"/>
    </location>
</feature>
<feature type="modified residue" description="Phosphothreonine" evidence="3">
    <location>
        <position position="12"/>
    </location>
</feature>
<feature type="modified residue" description="Asymmetric dimethylarginine" evidence="3">
    <location>
        <position position="18"/>
    </location>
</feature>
<feature type="modified residue" description="Citrulline; alternate" evidence="3">
    <location>
        <position position="18"/>
    </location>
</feature>
<feature type="modified residue" description="N6-(2-hydroxyisobutyryl)lysine; alternate" evidence="3">
    <location>
        <position position="19"/>
    </location>
</feature>
<feature type="modified residue" description="N6-(beta-hydroxybutyryl)lysine; alternate" evidence="3">
    <location>
        <position position="19"/>
    </location>
</feature>
<feature type="modified residue" description="N6-acetyllysine; alternate" evidence="3">
    <location>
        <position position="19"/>
    </location>
</feature>
<feature type="modified residue" description="N6-butyryllysine; alternate" evidence="3">
    <location>
        <position position="19"/>
    </location>
</feature>
<feature type="modified residue" description="N6-crotonyllysine; alternate" evidence="3">
    <location>
        <position position="19"/>
    </location>
</feature>
<feature type="modified residue" description="N6-glutaryllysine; alternate" evidence="3">
    <location>
        <position position="19"/>
    </location>
</feature>
<feature type="modified residue" description="N6-lactoyllysine; alternate" evidence="1">
    <location>
        <position position="19"/>
    </location>
</feature>
<feature type="modified residue" description="N6-methyllysine; alternate" evidence="3">
    <location>
        <position position="19"/>
    </location>
</feature>
<feature type="modified residue" description="N6-(2-hydroxyisobutyryl)lysine; alternate" evidence="3">
    <location>
        <position position="24"/>
    </location>
</feature>
<feature type="modified residue" description="N6-(beta-hydroxybutyryl)lysine; alternate" evidence="3">
    <location>
        <position position="24"/>
    </location>
</feature>
<feature type="modified residue" description="N6-acetyllysine; alternate" evidence="3">
    <location>
        <position position="24"/>
    </location>
</feature>
<feature type="modified residue" description="N6-butyryllysine; alternate" evidence="3">
    <location>
        <position position="24"/>
    </location>
</feature>
<feature type="modified residue" description="N6-crotonyllysine; alternate" evidence="3">
    <location>
        <position position="24"/>
    </location>
</feature>
<feature type="modified residue" description="N6-glutaryllysine; alternate" evidence="3">
    <location>
        <position position="24"/>
    </location>
</feature>
<feature type="modified residue" description="N6-lactoyllysine; alternate" evidence="1">
    <location>
        <position position="24"/>
    </location>
</feature>
<feature type="modified residue" description="N6-methyllysine; alternate" evidence="3">
    <location>
        <position position="24"/>
    </location>
</feature>
<feature type="modified residue" description="N6,N6,N6-trimethyllysine; alternate" evidence="3">
    <location>
        <position position="28"/>
    </location>
</feature>
<feature type="modified residue" description="N6,N6-dimethyllysine; alternate" evidence="3">
    <location>
        <position position="28"/>
    </location>
</feature>
<feature type="modified residue" description="N6-(2-hydroxyisobutyryl)lysine; alternate" evidence="3">
    <location>
        <position position="28"/>
    </location>
</feature>
<feature type="modified residue" description="N6-(beta-hydroxybutyryl)lysine; alternate" evidence="3">
    <location>
        <position position="28"/>
    </location>
</feature>
<feature type="modified residue" description="N6-acetyllysine; alternate" evidence="3">
    <location>
        <position position="28"/>
    </location>
</feature>
<feature type="modified residue" description="N6-crotonyllysine; alternate" evidence="3">
    <location>
        <position position="28"/>
    </location>
</feature>
<feature type="modified residue" description="N6-glutaryllysine; alternate" evidence="3">
    <location>
        <position position="28"/>
    </location>
</feature>
<feature type="modified residue" description="N6-lactoyllysine; alternate" evidence="1">
    <location>
        <position position="28"/>
    </location>
</feature>
<feature type="modified residue" description="N6-methyllysine; alternate" evidence="3">
    <location>
        <position position="28"/>
    </location>
</feature>
<feature type="modified residue" description="N6,N6,N6-trimethyllysine; alternate" evidence="3">
    <location>
        <position position="37"/>
    </location>
</feature>
<feature type="modified residue" description="N6,N6-dimethyllysine; alternate" evidence="3">
    <location>
        <position position="37"/>
    </location>
</feature>
<feature type="modified residue" description="N6-(2-hydroxyisobutyryl)lysine; alternate" evidence="3">
    <location>
        <position position="37"/>
    </location>
</feature>
<feature type="modified residue" description="N6-acetyllysine; alternate" evidence="3">
    <location>
        <position position="37"/>
    </location>
</feature>
<feature type="modified residue" description="N6-methyllysine; alternate" evidence="3">
    <location>
        <position position="37"/>
    </location>
</feature>
<feature type="modified residue" description="N6-methyllysine" evidence="1">
    <location>
        <position position="38"/>
    </location>
</feature>
<feature type="modified residue" description="Phosphotyrosine" evidence="3">
    <location>
        <position position="42"/>
    </location>
</feature>
<feature type="modified residue" description="N6,N6,N6-trimethyllysine; alternate" evidence="3">
    <location>
        <position position="57"/>
    </location>
</feature>
<feature type="modified residue" description="N6-(2-hydroxyisobutyryl)lysine; alternate" evidence="3">
    <location>
        <position position="57"/>
    </location>
</feature>
<feature type="modified residue" description="N6-(beta-hydroxybutyryl)lysine; alternate" evidence="3">
    <location>
        <position position="57"/>
    </location>
</feature>
<feature type="modified residue" description="N6-acetyllysine; alternate" evidence="3">
    <location>
        <position position="57"/>
    </location>
</feature>
<feature type="modified residue" description="N6-crotonyllysine; alternate" evidence="3">
    <location>
        <position position="57"/>
    </location>
</feature>
<feature type="modified residue" description="N6-glutaryllysine; alternate" evidence="3">
    <location>
        <position position="57"/>
    </location>
</feature>
<feature type="modified residue" description="N6-lactoyllysine; alternate" evidence="2">
    <location>
        <position position="57"/>
    </location>
</feature>
<feature type="modified residue" description="N6-methyllysine" evidence="3">
    <location>
        <position position="57"/>
    </location>
</feature>
<feature type="modified residue" description="N6-succinyllysine; alternate" evidence="3">
    <location>
        <position position="57"/>
    </location>
</feature>
<feature type="modified residue" description="Phosphoserine" evidence="3">
    <location>
        <position position="58"/>
    </location>
</feature>
<feature type="modified residue" description="N6-(2-hydroxyisobutyryl)lysine; alternate" evidence="3">
    <location>
        <position position="65"/>
    </location>
</feature>
<feature type="modified residue" description="N6-methyllysine; alternate" evidence="3">
    <location>
        <position position="65"/>
    </location>
</feature>
<feature type="modified residue" description="Phosphoserine" evidence="3">
    <location>
        <position position="87"/>
    </location>
</feature>
<feature type="modified residue" description="Phosphothreonine" evidence="5">
    <location>
        <position position="108"/>
    </location>
</feature>
<feature type="mutagenesis site" description="Triggers interaction with DAXX." evidence="10">
    <original>KPGTL</original>
    <variation>RPGTV</variation>
    <location>
        <begin position="43"/>
        <end position="47"/>
    </location>
</feature>
<feature type="mutagenesis site" description="Enhanced binding of histone H1 to histone H3.Y-containing nucleosomes. Does not greatly affect the stability of the nucleosome." evidence="8 9">
    <original>K</original>
    <variation>R</variation>
    <location>
        <position position="43"/>
    </location>
</feature>
<feature type="mutagenesis site" description="Triggers interaction with DAXX; when associated with I-63." evidence="10">
    <original>L</original>
    <variation>V</variation>
    <location>
        <position position="47"/>
    </location>
</feature>
<feature type="mutagenesis site" description="Does not establish interaction with DAXX." evidence="10">
    <original>Q</original>
    <variation>E</variation>
    <location>
        <position position="60"/>
    </location>
</feature>
<feature type="mutagenesis site" description="Does not affect stability of the nucleosome. Triggers interaction with DAXX; when associated with V-47." evidence="9 10">
    <original>L</original>
    <variation>I</variation>
    <location>
        <position position="63"/>
    </location>
</feature>
<feature type="mutagenesis site" description="Impaired association between H3.Y and H4 and stability of the nucleosome." evidence="9">
    <original>M</original>
    <variation>I</variation>
    <location>
        <position position="125"/>
    </location>
</feature>
<feature type="mutagenesis site" description="Does not affect association between H3.Y and H4." evidence="9">
    <original>L</original>
    <variation>I</variation>
    <location>
        <position position="131"/>
    </location>
</feature>
<feature type="mutagenesis site" description="Does not affect association between H3.Y and H4." evidence="9">
    <original>R</original>
    <variation>G</variation>
    <location>
        <position position="133"/>
    </location>
</feature>
<feature type="mutagenesis site" description="Impaired association between H3.Y and H4." evidence="9">
    <original>G</original>
    <variation>R</variation>
    <location>
        <position position="135"/>
    </location>
</feature>
<feature type="helix" evidence="16">
    <location>
        <begin position="46"/>
        <end position="56"/>
    </location>
</feature>
<feature type="helix" evidence="16">
    <location>
        <begin position="65"/>
        <end position="79"/>
    </location>
</feature>
<feature type="helix" evidence="16">
    <location>
        <begin position="87"/>
        <end position="114"/>
    </location>
</feature>
<feature type="strand" evidence="16">
    <location>
        <begin position="118"/>
        <end position="120"/>
    </location>
</feature>
<feature type="helix" evidence="16">
    <location>
        <begin position="122"/>
        <end position="130"/>
    </location>
</feature>
<feature type="turn" evidence="16">
    <location>
        <begin position="131"/>
        <end position="133"/>
    </location>
</feature>
<evidence type="ECO:0000250" key="1">
    <source>
        <dbReference type="UniProtKB" id="P68431"/>
    </source>
</evidence>
<evidence type="ECO:0000250" key="2">
    <source>
        <dbReference type="UniProtKB" id="P68433"/>
    </source>
</evidence>
<evidence type="ECO:0000250" key="3">
    <source>
        <dbReference type="UniProtKB" id="P84243"/>
    </source>
</evidence>
<evidence type="ECO:0000250" key="4">
    <source>
        <dbReference type="UniProtKB" id="P84244"/>
    </source>
</evidence>
<evidence type="ECO:0000250" key="5">
    <source>
        <dbReference type="UniProtKB" id="Q71DI3"/>
    </source>
</evidence>
<evidence type="ECO:0000256" key="6">
    <source>
        <dbReference type="SAM" id="MobiDB-lite"/>
    </source>
</evidence>
<evidence type="ECO:0000269" key="7">
    <source>
    </source>
</evidence>
<evidence type="ECO:0000269" key="8">
    <source>
    </source>
</evidence>
<evidence type="ECO:0000269" key="9">
    <source>
    </source>
</evidence>
<evidence type="ECO:0000269" key="10">
    <source>
    </source>
</evidence>
<evidence type="ECO:0000303" key="11">
    <source>
    </source>
</evidence>
<evidence type="ECO:0000305" key="12"/>
<evidence type="ECO:0000305" key="13">
    <source>
    </source>
</evidence>
<evidence type="ECO:0000312" key="14">
    <source>
        <dbReference type="HGNC" id="HGNC:43735"/>
    </source>
</evidence>
<evidence type="ECO:0007744" key="15">
    <source>
        <dbReference type="PDB" id="5AY8"/>
    </source>
</evidence>
<evidence type="ECO:0007829" key="16">
    <source>
        <dbReference type="PDB" id="5AY8"/>
    </source>
</evidence>
<reference key="1">
    <citation type="journal article" date="2004" name="Nature">
        <title>The DNA sequence and comparative analysis of human chromosome 5.</title>
        <authorList>
            <person name="Schmutz J."/>
            <person name="Martin J."/>
            <person name="Terry A."/>
            <person name="Couronne O."/>
            <person name="Grimwood J."/>
            <person name="Lowry S."/>
            <person name="Gordon L.A."/>
            <person name="Scott D."/>
            <person name="Xie G."/>
            <person name="Huang W."/>
            <person name="Hellsten U."/>
            <person name="Tran-Gyamfi M."/>
            <person name="She X."/>
            <person name="Prabhakar S."/>
            <person name="Aerts A."/>
            <person name="Altherr M."/>
            <person name="Bajorek E."/>
            <person name="Black S."/>
            <person name="Branscomb E."/>
            <person name="Caoile C."/>
            <person name="Challacombe J.F."/>
            <person name="Chan Y.M."/>
            <person name="Denys M."/>
            <person name="Detter J.C."/>
            <person name="Escobar J."/>
            <person name="Flowers D."/>
            <person name="Fotopulos D."/>
            <person name="Glavina T."/>
            <person name="Gomez M."/>
            <person name="Gonzales E."/>
            <person name="Goodstein D."/>
            <person name="Grigoriev I."/>
            <person name="Groza M."/>
            <person name="Hammon N."/>
            <person name="Hawkins T."/>
            <person name="Haydu L."/>
            <person name="Israni S."/>
            <person name="Jett J."/>
            <person name="Kadner K."/>
            <person name="Kimball H."/>
            <person name="Kobayashi A."/>
            <person name="Lopez F."/>
            <person name="Lou Y."/>
            <person name="Martinez D."/>
            <person name="Medina C."/>
            <person name="Morgan J."/>
            <person name="Nandkeshwar R."/>
            <person name="Noonan J.P."/>
            <person name="Pitluck S."/>
            <person name="Pollard M."/>
            <person name="Predki P."/>
            <person name="Priest J."/>
            <person name="Ramirez L."/>
            <person name="Retterer J."/>
            <person name="Rodriguez A."/>
            <person name="Rogers S."/>
            <person name="Salamov A."/>
            <person name="Salazar A."/>
            <person name="Thayer N."/>
            <person name="Tice H."/>
            <person name="Tsai M."/>
            <person name="Ustaszewska A."/>
            <person name="Vo N."/>
            <person name="Wheeler J."/>
            <person name="Wu K."/>
            <person name="Yang J."/>
            <person name="Dickson M."/>
            <person name="Cheng J.-F."/>
            <person name="Eichler E.E."/>
            <person name="Olsen A."/>
            <person name="Pennacchio L.A."/>
            <person name="Rokhsar D.S."/>
            <person name="Richardson P."/>
            <person name="Lucas S.M."/>
            <person name="Myers R.M."/>
            <person name="Rubin E.M."/>
        </authorList>
    </citation>
    <scope>NUCLEOTIDE SEQUENCE [LARGE SCALE GENOMIC DNA]</scope>
</reference>
<reference key="2">
    <citation type="journal article" date="2010" name="J. Cell Biol.">
        <title>Identification and characterization of two novel primate-specific histone H3 variants, H3.X and H3.Y.</title>
        <authorList>
            <person name="Wiedemann S.M."/>
            <person name="Mildner S.N."/>
            <person name="Boenisch C."/>
            <person name="Israel L."/>
            <person name="Maiser A."/>
            <person name="Matheisl S."/>
            <person name="Straub T."/>
            <person name="Merkl R."/>
            <person name="Leonhardt H."/>
            <person name="Kremmer E."/>
            <person name="Schermelleh L."/>
            <person name="Hake S.B."/>
        </authorList>
    </citation>
    <scope>SUBCELLULAR LOCATION</scope>
    <scope>SUBUNIT</scope>
    <scope>TISSUE SPECIFICITY</scope>
</reference>
<reference key="3">
    <citation type="journal article" date="2017" name="Nucleus">
        <title>Identification of the amino acid residues responsible for stable nucleosome formation by histone H3.Y.</title>
        <authorList>
            <person name="Kujirai T."/>
            <person name="Horikoshi N."/>
            <person name="Xie Y."/>
            <person name="Taguchi H."/>
            <person name="Kurumizaka H."/>
        </authorList>
    </citation>
    <scope>MUTAGENESIS OF LYS-43; LEU-63; MET-125; LEU-131; ARG-133 AND GLY-135</scope>
</reference>
<reference key="4">
    <citation type="journal article" date="2017" name="Nucleic Acids Res.">
        <title>H3.Y discriminates between HIRA and DAXX chaperone complexes and reveals unexpected insights into human DAXX-H3.3-H4 binding and deposition requirements.</title>
        <authorList>
            <person name="Zink L.M."/>
            <person name="Delbarre E."/>
            <person name="Eberl H.C."/>
            <person name="Keilhauer E.C."/>
            <person name="Boenisch C."/>
            <person name="Puenzeler S."/>
            <person name="Bartkuhn M."/>
            <person name="Collas P."/>
            <person name="Mann M."/>
            <person name="Hake S.B."/>
        </authorList>
    </citation>
    <scope>SUBCELLULAR LOCATION</scope>
    <scope>INTERACTION WITH HIRA</scope>
    <scope>MUTAGENESIS OF 43-LYS--VAL-47; LEU-47; GLN-60 AND LEU-63</scope>
</reference>
<reference evidence="15" key="5">
    <citation type="journal article" date="2016" name="Nucleic Acids Res.">
        <title>Structure and function of human histone H3.Y nucleosome.</title>
        <authorList>
            <person name="Kujirai T."/>
            <person name="Horikoshi N."/>
            <person name="Sato K."/>
            <person name="Maehara K."/>
            <person name="Machida S."/>
            <person name="Osakabe A."/>
            <person name="Kimura H."/>
            <person name="Ohkawa Y."/>
            <person name="Kurumizaka H."/>
        </authorList>
    </citation>
    <scope>X-RAY CRYSTALLOGRAPHY (2.80 ANGSTROMS) OF 39-135 IN COMPLEX WITH H2A; H2B AND H4</scope>
    <scope>FUNCTION</scope>
    <scope>SUBCELLULAR LOCATION</scope>
    <scope>SUBUNIT</scope>
    <scope>MUTAGENESIS OF LYS-43</scope>
</reference>
<accession>P0DPK2</accession>
<protein>
    <recommendedName>
        <fullName evidence="11">Histone H3.Y</fullName>
    </recommendedName>
    <alternativeName>
        <fullName evidence="12">Histone H3.Y1</fullName>
    </alternativeName>
</protein>
<gene>
    <name evidence="14" type="primary">H3Y1</name>
</gene>
<proteinExistence type="evidence at protein level"/>
<dbReference type="EMBL" id="AC233724">
    <property type="status" value="NOT_ANNOTATED_CDS"/>
    <property type="molecule type" value="Genomic_DNA"/>
</dbReference>
<dbReference type="CCDS" id="CCDS87290.1"/>
<dbReference type="RefSeq" id="NP_001342187.1">
    <property type="nucleotide sequence ID" value="NM_001355258.2"/>
</dbReference>
<dbReference type="PDB" id="5AY8">
    <property type="method" value="X-ray"/>
    <property type="resolution" value="2.80 A"/>
    <property type="chains" value="A/E=39-135"/>
</dbReference>
<dbReference type="PDBsum" id="5AY8"/>
<dbReference type="SMR" id="P0DPK2"/>
<dbReference type="FunCoup" id="P0DPK2">
    <property type="interactions" value="9"/>
</dbReference>
<dbReference type="STRING" id="9606.ENSP00000496014"/>
<dbReference type="jPOST" id="P0DPK2"/>
<dbReference type="MassIVE" id="P0DPK2"/>
<dbReference type="PeptideAtlas" id="P0DPK2"/>
<dbReference type="Pumba" id="P0DPK2"/>
<dbReference type="Ensembl" id="ENST00000598383.3">
    <property type="protein sequence ID" value="ENSP00000496014.2"/>
    <property type="gene ID" value="ENSG00000269466.4"/>
</dbReference>
<dbReference type="GeneID" id="391769"/>
<dbReference type="MANE-Select" id="ENST00000598383.3">
    <property type="protein sequence ID" value="ENSP00000496014.2"/>
    <property type="RefSeq nucleotide sequence ID" value="NM_001355258.2"/>
    <property type="RefSeq protein sequence ID" value="NP_001342187.1"/>
</dbReference>
<dbReference type="AGR" id="HGNC:43735"/>
<dbReference type="GeneCards" id="H3Y1"/>
<dbReference type="HGNC" id="HGNC:43735">
    <property type="gene designation" value="H3Y1"/>
</dbReference>
<dbReference type="HPA" id="ENSG00000269466">
    <property type="expression patterns" value="Not detected"/>
</dbReference>
<dbReference type="neXtProt" id="NX_P0DPK2"/>
<dbReference type="OpenTargets" id="ENSG00000269466"/>
<dbReference type="VEuPathDB" id="HostDB:ENSG00000269466"/>
<dbReference type="GeneTree" id="ENSGT01130000278322"/>
<dbReference type="InParanoid" id="P0DPK2"/>
<dbReference type="OMA" id="KATDWQA"/>
<dbReference type="OrthoDB" id="9530041at2759"/>
<dbReference type="PAN-GO" id="P0DPK2">
    <property type="GO annotations" value="1 GO annotation based on evolutionary models"/>
</dbReference>
<dbReference type="SIGNOR" id="P0DPK2"/>
<dbReference type="Pharos" id="P0DPK2">
    <property type="development level" value="Tbio"/>
</dbReference>
<dbReference type="PRO" id="PR:P0DPK2"/>
<dbReference type="Proteomes" id="UP000005640">
    <property type="component" value="Chromosome 5"/>
</dbReference>
<dbReference type="Bgee" id="ENSG00000269466">
    <property type="expression patterns" value="Expressed in primordial germ cell in gonad and 7 other cell types or tissues"/>
</dbReference>
<dbReference type="GO" id="GO:0005654">
    <property type="term" value="C:nucleoplasm"/>
    <property type="evidence" value="ECO:0000314"/>
    <property type="project" value="HPA"/>
</dbReference>
<dbReference type="GO" id="GO:0000786">
    <property type="term" value="C:nucleosome"/>
    <property type="evidence" value="ECO:0000314"/>
    <property type="project" value="UniProtKB"/>
</dbReference>
<dbReference type="GO" id="GO:0005634">
    <property type="term" value="C:nucleus"/>
    <property type="evidence" value="ECO:0000318"/>
    <property type="project" value="GO_Central"/>
</dbReference>
<dbReference type="GO" id="GO:0031492">
    <property type="term" value="F:nucleosomal DNA binding"/>
    <property type="evidence" value="ECO:0000314"/>
    <property type="project" value="UniProtKB"/>
</dbReference>
<dbReference type="GO" id="GO:0046982">
    <property type="term" value="F:protein heterodimerization activity"/>
    <property type="evidence" value="ECO:0007669"/>
    <property type="project" value="InterPro"/>
</dbReference>
<dbReference type="GO" id="GO:0030527">
    <property type="term" value="F:structural constituent of chromatin"/>
    <property type="evidence" value="ECO:0007669"/>
    <property type="project" value="InterPro"/>
</dbReference>
<dbReference type="CDD" id="cd22911">
    <property type="entry name" value="HFD_H3"/>
    <property type="match status" value="1"/>
</dbReference>
<dbReference type="FunFam" id="1.10.20.10:FF:000001">
    <property type="entry name" value="Histone H3"/>
    <property type="match status" value="1"/>
</dbReference>
<dbReference type="Gene3D" id="1.10.20.10">
    <property type="entry name" value="Histone, subunit A"/>
    <property type="match status" value="1"/>
</dbReference>
<dbReference type="InterPro" id="IPR009072">
    <property type="entry name" value="Histone-fold"/>
</dbReference>
<dbReference type="InterPro" id="IPR007125">
    <property type="entry name" value="Histone_H2A/H2B/H3"/>
</dbReference>
<dbReference type="InterPro" id="IPR000164">
    <property type="entry name" value="Histone_H3/CENP-A"/>
</dbReference>
<dbReference type="PANTHER" id="PTHR11426">
    <property type="entry name" value="HISTONE H3"/>
    <property type="match status" value="1"/>
</dbReference>
<dbReference type="Pfam" id="PF00125">
    <property type="entry name" value="Histone"/>
    <property type="match status" value="1"/>
</dbReference>
<dbReference type="PRINTS" id="PR00622">
    <property type="entry name" value="HISTONEH3"/>
</dbReference>
<dbReference type="SMART" id="SM00428">
    <property type="entry name" value="H3"/>
    <property type="match status" value="1"/>
</dbReference>
<dbReference type="SUPFAM" id="SSF47113">
    <property type="entry name" value="Histone-fold"/>
    <property type="match status" value="1"/>
</dbReference>
<dbReference type="PROSITE" id="PS00959">
    <property type="entry name" value="HISTONE_H3_2"/>
    <property type="match status" value="1"/>
</dbReference>
<keyword id="KW-0002">3D-structure</keyword>
<keyword id="KW-0007">Acetylation</keyword>
<keyword id="KW-0158">Chromosome</keyword>
<keyword id="KW-0164">Citrullination</keyword>
<keyword id="KW-0379">Hydroxylation</keyword>
<keyword id="KW-0488">Methylation</keyword>
<keyword id="KW-0539">Nucleus</keyword>
<keyword id="KW-0597">Phosphoprotein</keyword>
<keyword id="KW-1185">Reference proteome</keyword>
<sequence>MARTKQTARKATAWQAPRKPLATKAAGKRAPPTGGIKKPHRYKPGTLALREIRKYQKSTQLLLRKLPFQRLVREIAQAISPDLRFQSAAIGALQEASEAYLVQLFEDTNLCAIHARRVTIMPRDMQLARRLRREGP</sequence>
<comment type="function">
    <text evidence="7 8 12">Primate-specific variant histone H3, which constitutes a core component of nucleosomes (PubMed:20819935, PubMed:27016736). Histone H3.Y-containing nucleosomes accumulate around transcription start sites and have flexible DNA ends, suggesting that they form relaxed chromatin that allows transcription factor access (PubMed:27016736). Histone H1 binds less efficiently to histone H3.Y-containing nucleosomes (PubMed:27016736). Nucleosomes wrap and compact DNA into chromatin, limiting DNA accessibility to the cellular machineries which require DNA as a template. Histones thereby play a central role in transcription regulation, DNA repair, DNA replication and chromosomal stability. DNA accessibility is regulated via a complex set of post-translational modifications of histones, also called histone code, and nucleosome remodeling (Probable).</text>
</comment>
<comment type="subunit">
    <text evidence="7 8 10 12">The nucleosome is a histone octamer containing two molecules each of H2A, H2B, H3 and H4 assembled in one H3-H4 heterotetramer and two H2A-H2B heterodimers (PubMed:20819935, PubMed:27016736). The octamer wraps approximately 147 bp of DNA (Probable). Interacts with HIRA, a chaperone required for its incorporation into nucleosomes (PubMed:28334823). Does not interact with DAXX chaperone (PubMed:28334823).</text>
</comment>
<comment type="subcellular location">
    <subcellularLocation>
        <location evidence="7">Nucleus</location>
    </subcellularLocation>
    <subcellularLocation>
        <location evidence="8 10 13">Chromosome</location>
    </subcellularLocation>
    <text evidence="8 10">Histone H3.Y-containing nucleosomes are depleted from repressive post-translational histone modifications (PubMed:28334823). Histone H3.Y-containing nucleosomes accumulate around transcription start sites (PubMed:27016736).</text>
</comment>
<comment type="tissue specificity">
    <text evidence="7">Expressed at low level in some tissues, such as testis and brain.</text>
</comment>
<comment type="PTM">
    <text evidence="3">Acetylation is generally linked to gene activation. Acetylation on Lys-10 (H3K9ac) impairs methylation at Arg-9 (H3R8me2s). Acetylation on Lys-19 (H3K18ac) and Lys-24 (H3K24ac) favors methylation at Arg-18 (H3R17me).</text>
</comment>
<comment type="PTM">
    <text evidence="3">Citrullination at Arg-9 (H3R8ci) and/or Arg-18 (H3R17ci) impairs methylation and represses transcription.</text>
</comment>
<comment type="PTM">
    <text evidence="3">Asymmetric dimethylation at Arg-18 (H3R17me2a) is linked to gene activation. Symmetric dimethylation at Arg-9 (H3R8me2s) is linked to gene repression. Asymmetric dimethylation at Arg-3 (H3R2me2a) is linked to gene repression and is mutually exclusive with H3 Lys-5 methylation (H3K4me2 and H3K4me3). H3R2me2a is present at the 3' of genes regardless of their transcription state and is enriched on inactive promoters, while it is absent on active promoters.</text>
</comment>
<comment type="PTM">
    <text evidence="3">Methylation at Lys-5 (H3K4me) facilitates subsequent acetylation of H3 and H4. Methylation at Lys-10 (H3K9me) and Lys-28 (H3K27me), which are linked to gene repression, are underrepresented. Methylation at Lys-10 (H3K9me) is a specific target for HP1 proteins (CBX1, CBX3 and CBX5) and prevents subsequent acetylation of H3 and H4.</text>
</comment>
<comment type="PTM">
    <text evidence="3">Phosphorylation at Thr-7 (H3T6ph) is a specific tag for epigenetic transcriptional activation that prevents demethylation of Lys-5 (H3K4me) by LSD1/KDM1A. At centromeres, specifically phosphorylated at Thr-12 (H3T11ph) from prophase to early anaphase. Phosphorylation at Thr-12 (H3T11ph) is a specific tag for epigenetic transcriptional activation that promotes demethylation of Lys-10 (H3K9me). Phosphorylation at Tyr-42 (H3Y41ph) promotes exclusion of CBX5 (HP1 alpha) from chromatin.</text>
</comment>
<comment type="PTM">
    <text evidence="3">Lysine deamination at Lys-5 (H3K4all) to form allysine. Allysine formation only takes place on H3K4me3 and results in gene repression.</text>
</comment>
<comment type="PTM">
    <text evidence="3">Crotonylation (Kcr) is specifically present in male germ cells and marks testis-specific genes in post-meiotic cells, including X-linked genes that escape sex chromosome inactivation in haploid cells. Crotonylation marks active promoters and enhancers and confers resistance to transcriptional repressors. It is also associated with post-meiotically activated genes on autosomes.</text>
</comment>
<comment type="PTM">
    <text evidence="2">Butyrylation of histones marks active promoters and competes with histone acetylation. It is present during late spermatogenesis.</text>
</comment>
<comment type="similarity">
    <text evidence="12">Belongs to the histone H3 family.</text>
</comment>